<comment type="similarity">
    <text evidence="1">Belongs to the asfivirus E111R family.</text>
</comment>
<gene>
    <name type="ordered locus">Ba71V-135</name>
    <name type="ORF">E111R</name>
</gene>
<sequence length="111" mass="12945">MSFSECPLVISACKKFLQKRITIENEALINALITALAQTSTLNDLCLLPIQTYLLSYKNAFEWIHFVCIAITTILDNKYNWKNCTVDINYIFLHVTYIYNIKTKEYLDYCS</sequence>
<evidence type="ECO:0000305" key="1"/>
<reference key="1">
    <citation type="journal article" date="1995" name="Virology">
        <title>Analysis of the complete nucleotide sequence of African swine fever virus.</title>
        <authorList>
            <person name="Yanez R.J."/>
            <person name="Rodriguez J.M."/>
            <person name="Nogal M.L."/>
            <person name="Yuste L."/>
            <person name="Enriquez C."/>
            <person name="Rodriguez J.F."/>
            <person name="Vinuela E."/>
        </authorList>
    </citation>
    <scope>NUCLEOTIDE SEQUENCE [LARGE SCALE GENOMIC DNA]</scope>
</reference>
<proteinExistence type="inferred from homology"/>
<feature type="chain" id="PRO_0000373475" description="Uncharacterized protein E111R">
    <location>
        <begin position="1"/>
        <end position="111"/>
    </location>
</feature>
<organism>
    <name type="scientific">African swine fever virus (strain Badajoz 1971 Vero-adapted)</name>
    <name type="common">Ba71V</name>
    <name type="synonym">ASFV</name>
    <dbReference type="NCBI Taxonomy" id="10498"/>
    <lineage>
        <taxon>Viruses</taxon>
        <taxon>Varidnaviria</taxon>
        <taxon>Bamfordvirae</taxon>
        <taxon>Nucleocytoviricota</taxon>
        <taxon>Pokkesviricetes</taxon>
        <taxon>Asfuvirales</taxon>
        <taxon>Asfarviridae</taxon>
        <taxon>Asfivirus</taxon>
        <taxon>African swine fever virus</taxon>
    </lineage>
</organism>
<name>VF111_ASFB7</name>
<accession>Q65203</accession>
<keyword id="KW-1185">Reference proteome</keyword>
<organismHost>
    <name type="scientific">Ornithodoros</name>
    <name type="common">relapsing fever ticks</name>
    <dbReference type="NCBI Taxonomy" id="6937"/>
</organismHost>
<organismHost>
    <name type="scientific">Sus scrofa</name>
    <name type="common">Pig</name>
    <dbReference type="NCBI Taxonomy" id="9823"/>
</organismHost>
<protein>
    <recommendedName>
        <fullName>Uncharacterized protein E111R</fullName>
        <shortName>pE111R</shortName>
    </recommendedName>
</protein>
<dbReference type="EMBL" id="U18466">
    <property type="protein sequence ID" value="AAA65363.1"/>
    <property type="molecule type" value="Genomic_DNA"/>
</dbReference>
<dbReference type="RefSeq" id="NP_042827.1">
    <property type="nucleotide sequence ID" value="NC_001659.2"/>
</dbReference>
<dbReference type="SMR" id="Q65203"/>
<dbReference type="GeneID" id="22220363"/>
<dbReference type="KEGG" id="vg:22220363"/>
<dbReference type="Proteomes" id="UP000000624">
    <property type="component" value="Segment"/>
</dbReference>